<dbReference type="EC" id="4.2.1.32"/>
<dbReference type="EMBL" id="CP000243">
    <property type="protein sequence ID" value="ABE08944.1"/>
    <property type="molecule type" value="Genomic_DNA"/>
</dbReference>
<dbReference type="RefSeq" id="WP_000986807.1">
    <property type="nucleotide sequence ID" value="NZ_CP064825.1"/>
</dbReference>
<dbReference type="SMR" id="Q1R6S0"/>
<dbReference type="KEGG" id="eci:UTI89_C3497"/>
<dbReference type="HOGENOM" id="CLU_041245_1_0_6"/>
<dbReference type="Proteomes" id="UP000001952">
    <property type="component" value="Chromosome"/>
</dbReference>
<dbReference type="GO" id="GO:0051539">
    <property type="term" value="F:4 iron, 4 sulfur cluster binding"/>
    <property type="evidence" value="ECO:0007669"/>
    <property type="project" value="UniProtKB-KW"/>
</dbReference>
<dbReference type="GO" id="GO:0008730">
    <property type="term" value="F:L(+)-tartrate dehydratase activity"/>
    <property type="evidence" value="ECO:0007669"/>
    <property type="project" value="UniProtKB-EC"/>
</dbReference>
<dbReference type="GO" id="GO:0046872">
    <property type="term" value="F:metal ion binding"/>
    <property type="evidence" value="ECO:0007669"/>
    <property type="project" value="UniProtKB-KW"/>
</dbReference>
<dbReference type="InterPro" id="IPR051208">
    <property type="entry name" value="Class-I_Fumarase/Tartrate_DH"/>
</dbReference>
<dbReference type="InterPro" id="IPR004646">
    <property type="entry name" value="Fe-S_hydro-lyase_TtdA-typ_cat"/>
</dbReference>
<dbReference type="NCBIfam" id="NF006084">
    <property type="entry name" value="PRK08230.1"/>
    <property type="match status" value="1"/>
</dbReference>
<dbReference type="NCBIfam" id="TIGR00722">
    <property type="entry name" value="ttdA_fumA_fumB"/>
    <property type="match status" value="1"/>
</dbReference>
<dbReference type="PANTHER" id="PTHR30389">
    <property type="entry name" value="FUMARATE HYDRATASE-RELATED"/>
    <property type="match status" value="1"/>
</dbReference>
<dbReference type="PANTHER" id="PTHR30389:SF19">
    <property type="entry name" value="L(+)-TARTRATE DEHYDRATASE SUBUNIT ALPHA"/>
    <property type="match status" value="1"/>
</dbReference>
<dbReference type="Pfam" id="PF05681">
    <property type="entry name" value="Fumerase"/>
    <property type="match status" value="1"/>
</dbReference>
<evidence type="ECO:0000250" key="1"/>
<evidence type="ECO:0000250" key="2">
    <source>
        <dbReference type="UniProtKB" id="E9AE57"/>
    </source>
</evidence>
<evidence type="ECO:0000250" key="3">
    <source>
        <dbReference type="UniProtKB" id="P05847"/>
    </source>
</evidence>
<evidence type="ECO:0000305" key="4"/>
<proteinExistence type="inferred from homology"/>
<sequence>MMSESNKQQAVNKLTEIVANFTAMISTRMPDDVVDKLKQLKDAETSSMGKIIYHTMFDNMQKAIDLNRPACQDTGEIMFFVKVGSRFPLLGELQSILKQAVEEATVKAPLRHNAVEIFDEVNTGKNTGSGVPWVTWDIVPDGDDAEIEVYMAGGGCTLPGRSKVLMPSEGYEGVVKFVFENISTLAVNACPPVLVGVGIATSVETAAVLSRKAILRPIGSRHPNPKAAELELRLEEGLNRLGIGPQGLTGNSSVMGVHIESAARHPSTIGVAVSTGCWAHRRGTLRVHADLTFENLSHTRSAL</sequence>
<name>TTDA_ECOUT</name>
<comment type="catalytic activity">
    <reaction>
        <text>(2R,3R)-tartrate = oxaloacetate + H2O</text>
        <dbReference type="Rhea" id="RHEA:15413"/>
        <dbReference type="ChEBI" id="CHEBI:15377"/>
        <dbReference type="ChEBI" id="CHEBI:16452"/>
        <dbReference type="ChEBI" id="CHEBI:30924"/>
        <dbReference type="EC" id="4.2.1.32"/>
    </reaction>
</comment>
<comment type="cofactor">
    <cofactor evidence="3">
        <name>iron-sulfur cluster</name>
        <dbReference type="ChEBI" id="CHEBI:30408"/>
    </cofactor>
</comment>
<comment type="subunit">
    <text evidence="1">Tetramer of two alpha and two beta subunits.</text>
</comment>
<comment type="induction">
    <text evidence="1">Induced by tartrate, via TtdR.</text>
</comment>
<comment type="similarity">
    <text evidence="4">Belongs to the class-I fumarase family.</text>
</comment>
<organism>
    <name type="scientific">Escherichia coli (strain UTI89 / UPEC)</name>
    <dbReference type="NCBI Taxonomy" id="364106"/>
    <lineage>
        <taxon>Bacteria</taxon>
        <taxon>Pseudomonadati</taxon>
        <taxon>Pseudomonadota</taxon>
        <taxon>Gammaproteobacteria</taxon>
        <taxon>Enterobacterales</taxon>
        <taxon>Enterobacteriaceae</taxon>
        <taxon>Escherichia</taxon>
    </lineage>
</organism>
<protein>
    <recommendedName>
        <fullName>L(+)-tartrate dehydratase subunit alpha</fullName>
        <shortName>L-TTD alpha</shortName>
        <ecNumber>4.2.1.32</ecNumber>
    </recommendedName>
</protein>
<feature type="chain" id="PRO_0000262699" description="L(+)-tartrate dehydratase subunit alpha">
    <location>
        <begin position="1"/>
        <end position="303"/>
    </location>
</feature>
<feature type="binding site" evidence="2">
    <location>
        <position position="71"/>
    </location>
    <ligand>
        <name>iron-sulfur cluster</name>
        <dbReference type="ChEBI" id="CHEBI:30408"/>
    </ligand>
</feature>
<feature type="binding site" evidence="2">
    <location>
        <position position="190"/>
    </location>
    <ligand>
        <name>iron-sulfur cluster</name>
        <dbReference type="ChEBI" id="CHEBI:30408"/>
    </ligand>
</feature>
<feature type="binding site" evidence="2">
    <location>
        <position position="277"/>
    </location>
    <ligand>
        <name>iron-sulfur cluster</name>
        <dbReference type="ChEBI" id="CHEBI:30408"/>
    </ligand>
</feature>
<accession>Q1R6S0</accession>
<keyword id="KW-0004">4Fe-4S</keyword>
<keyword id="KW-0408">Iron</keyword>
<keyword id="KW-0411">Iron-sulfur</keyword>
<keyword id="KW-0456">Lyase</keyword>
<keyword id="KW-0479">Metal-binding</keyword>
<reference key="1">
    <citation type="journal article" date="2006" name="Proc. Natl. Acad. Sci. U.S.A.">
        <title>Identification of genes subject to positive selection in uropathogenic strains of Escherichia coli: a comparative genomics approach.</title>
        <authorList>
            <person name="Chen S.L."/>
            <person name="Hung C.-S."/>
            <person name="Xu J."/>
            <person name="Reigstad C.S."/>
            <person name="Magrini V."/>
            <person name="Sabo A."/>
            <person name="Blasiar D."/>
            <person name="Bieri T."/>
            <person name="Meyer R.R."/>
            <person name="Ozersky P."/>
            <person name="Armstrong J.R."/>
            <person name="Fulton R.S."/>
            <person name="Latreille J.P."/>
            <person name="Spieth J."/>
            <person name="Hooton T.M."/>
            <person name="Mardis E.R."/>
            <person name="Hultgren S.J."/>
            <person name="Gordon J.I."/>
        </authorList>
    </citation>
    <scope>NUCLEOTIDE SEQUENCE [LARGE SCALE GENOMIC DNA]</scope>
    <source>
        <strain>UTI89 / UPEC</strain>
    </source>
</reference>
<gene>
    <name type="primary">ttdA</name>
    <name type="ordered locus">UTI89_C3497</name>
</gene>